<sequence length="243" mass="27421">MTKLFIPYIMGNKSFIKNMKILDENGADIIEIGVPFSDPVADGPIIMEAGNRAIKQGVTINYIFNELSNNKDEINCKYVLMTYYNIIVSYGEEAFFKECEKVGVYGVIIPDLPYELTQKLKHKISKFDVKVISLISMTANDDRIKEIVKHAEGFIYTVTMNATTGKNGTFHPQLKDKLKHLKAHTDIPVVAGFGIRTKEHIKDLATVADGVVIGSEIVKRFCQDNNEDTIHYLKQVRETLDTL</sequence>
<keyword id="KW-0028">Amino-acid biosynthesis</keyword>
<keyword id="KW-0057">Aromatic amino acid biosynthesis</keyword>
<keyword id="KW-0456">Lyase</keyword>
<keyword id="KW-0822">Tryptophan biosynthesis</keyword>
<accession>Q4L680</accession>
<organism>
    <name type="scientific">Staphylococcus haemolyticus (strain JCSC1435)</name>
    <dbReference type="NCBI Taxonomy" id="279808"/>
    <lineage>
        <taxon>Bacteria</taxon>
        <taxon>Bacillati</taxon>
        <taxon>Bacillota</taxon>
        <taxon>Bacilli</taxon>
        <taxon>Bacillales</taxon>
        <taxon>Staphylococcaceae</taxon>
        <taxon>Staphylococcus</taxon>
    </lineage>
</organism>
<gene>
    <name evidence="1" type="primary">trpA</name>
    <name type="ordered locus">SH1536</name>
</gene>
<name>TRPA_STAHJ</name>
<dbReference type="EC" id="4.2.1.20" evidence="1"/>
<dbReference type="EMBL" id="AP006716">
    <property type="protein sequence ID" value="BAE04845.1"/>
    <property type="molecule type" value="Genomic_DNA"/>
</dbReference>
<dbReference type="RefSeq" id="WP_011275827.1">
    <property type="nucleotide sequence ID" value="NC_007168.1"/>
</dbReference>
<dbReference type="SMR" id="Q4L680"/>
<dbReference type="GeneID" id="93780923"/>
<dbReference type="KEGG" id="sha:SH1536"/>
<dbReference type="eggNOG" id="COG0159">
    <property type="taxonomic scope" value="Bacteria"/>
</dbReference>
<dbReference type="HOGENOM" id="CLU_016734_0_0_9"/>
<dbReference type="OrthoDB" id="9804578at2"/>
<dbReference type="UniPathway" id="UPA00035">
    <property type="reaction ID" value="UER00044"/>
</dbReference>
<dbReference type="Proteomes" id="UP000000543">
    <property type="component" value="Chromosome"/>
</dbReference>
<dbReference type="GO" id="GO:0005829">
    <property type="term" value="C:cytosol"/>
    <property type="evidence" value="ECO:0007669"/>
    <property type="project" value="TreeGrafter"/>
</dbReference>
<dbReference type="GO" id="GO:0004834">
    <property type="term" value="F:tryptophan synthase activity"/>
    <property type="evidence" value="ECO:0007669"/>
    <property type="project" value="UniProtKB-UniRule"/>
</dbReference>
<dbReference type="CDD" id="cd04724">
    <property type="entry name" value="Tryptophan_synthase_alpha"/>
    <property type="match status" value="1"/>
</dbReference>
<dbReference type="Gene3D" id="3.20.20.70">
    <property type="entry name" value="Aldolase class I"/>
    <property type="match status" value="1"/>
</dbReference>
<dbReference type="HAMAP" id="MF_00131">
    <property type="entry name" value="Trp_synth_alpha"/>
    <property type="match status" value="1"/>
</dbReference>
<dbReference type="InterPro" id="IPR013785">
    <property type="entry name" value="Aldolase_TIM"/>
</dbReference>
<dbReference type="InterPro" id="IPR011060">
    <property type="entry name" value="RibuloseP-bd_barrel"/>
</dbReference>
<dbReference type="InterPro" id="IPR018204">
    <property type="entry name" value="Trp_synthase_alpha_AS"/>
</dbReference>
<dbReference type="InterPro" id="IPR002028">
    <property type="entry name" value="Trp_synthase_suA"/>
</dbReference>
<dbReference type="NCBIfam" id="TIGR00262">
    <property type="entry name" value="trpA"/>
    <property type="match status" value="1"/>
</dbReference>
<dbReference type="PANTHER" id="PTHR43406:SF1">
    <property type="entry name" value="TRYPTOPHAN SYNTHASE ALPHA CHAIN, CHLOROPLASTIC"/>
    <property type="match status" value="1"/>
</dbReference>
<dbReference type="PANTHER" id="PTHR43406">
    <property type="entry name" value="TRYPTOPHAN SYNTHASE, ALPHA CHAIN"/>
    <property type="match status" value="1"/>
</dbReference>
<dbReference type="Pfam" id="PF00290">
    <property type="entry name" value="Trp_syntA"/>
    <property type="match status" value="1"/>
</dbReference>
<dbReference type="SUPFAM" id="SSF51366">
    <property type="entry name" value="Ribulose-phoshate binding barrel"/>
    <property type="match status" value="1"/>
</dbReference>
<dbReference type="PROSITE" id="PS00167">
    <property type="entry name" value="TRP_SYNTHASE_ALPHA"/>
    <property type="match status" value="1"/>
</dbReference>
<feature type="chain" id="PRO_1000018292" description="Tryptophan synthase alpha chain">
    <location>
        <begin position="1"/>
        <end position="243"/>
    </location>
</feature>
<feature type="active site" description="Proton acceptor" evidence="1">
    <location>
        <position position="31"/>
    </location>
</feature>
<feature type="active site" description="Proton acceptor" evidence="1">
    <location>
        <position position="42"/>
    </location>
</feature>
<protein>
    <recommendedName>
        <fullName evidence="1">Tryptophan synthase alpha chain</fullName>
        <ecNumber evidence="1">4.2.1.20</ecNumber>
    </recommendedName>
</protein>
<proteinExistence type="inferred from homology"/>
<reference key="1">
    <citation type="journal article" date="2005" name="J. Bacteriol.">
        <title>Whole-genome sequencing of Staphylococcus haemolyticus uncovers the extreme plasticity of its genome and the evolution of human-colonizing staphylococcal species.</title>
        <authorList>
            <person name="Takeuchi F."/>
            <person name="Watanabe S."/>
            <person name="Baba T."/>
            <person name="Yuzawa H."/>
            <person name="Ito T."/>
            <person name="Morimoto Y."/>
            <person name="Kuroda M."/>
            <person name="Cui L."/>
            <person name="Takahashi M."/>
            <person name="Ankai A."/>
            <person name="Baba S."/>
            <person name="Fukui S."/>
            <person name="Lee J.C."/>
            <person name="Hiramatsu K."/>
        </authorList>
    </citation>
    <scope>NUCLEOTIDE SEQUENCE [LARGE SCALE GENOMIC DNA]</scope>
    <source>
        <strain>JCSC1435</strain>
    </source>
</reference>
<evidence type="ECO:0000255" key="1">
    <source>
        <dbReference type="HAMAP-Rule" id="MF_00131"/>
    </source>
</evidence>
<comment type="function">
    <text evidence="1">The alpha subunit is responsible for the aldol cleavage of indoleglycerol phosphate to indole and glyceraldehyde 3-phosphate.</text>
</comment>
<comment type="catalytic activity">
    <reaction evidence="1">
        <text>(1S,2R)-1-C-(indol-3-yl)glycerol 3-phosphate + L-serine = D-glyceraldehyde 3-phosphate + L-tryptophan + H2O</text>
        <dbReference type="Rhea" id="RHEA:10532"/>
        <dbReference type="ChEBI" id="CHEBI:15377"/>
        <dbReference type="ChEBI" id="CHEBI:33384"/>
        <dbReference type="ChEBI" id="CHEBI:57912"/>
        <dbReference type="ChEBI" id="CHEBI:58866"/>
        <dbReference type="ChEBI" id="CHEBI:59776"/>
        <dbReference type="EC" id="4.2.1.20"/>
    </reaction>
</comment>
<comment type="pathway">
    <text evidence="1">Amino-acid biosynthesis; L-tryptophan biosynthesis; L-tryptophan from chorismate: step 5/5.</text>
</comment>
<comment type="subunit">
    <text evidence="1">Tetramer of two alpha and two beta chains.</text>
</comment>
<comment type="similarity">
    <text evidence="1">Belongs to the TrpA family.</text>
</comment>